<dbReference type="EMBL" id="CP000155">
    <property type="protein sequence ID" value="ABC29331.1"/>
    <property type="molecule type" value="Genomic_DNA"/>
</dbReference>
<dbReference type="RefSeq" id="WP_011396400.1">
    <property type="nucleotide sequence ID" value="NC_007645.1"/>
</dbReference>
<dbReference type="SMR" id="Q2SJ43"/>
<dbReference type="STRING" id="349521.HCH_02529"/>
<dbReference type="KEGG" id="hch:HCH_02529"/>
<dbReference type="eggNOG" id="COG3067">
    <property type="taxonomic scope" value="Bacteria"/>
</dbReference>
<dbReference type="HOGENOM" id="CLU_041110_0_0_6"/>
<dbReference type="OrthoDB" id="5288732at2"/>
<dbReference type="Proteomes" id="UP000000238">
    <property type="component" value="Chromosome"/>
</dbReference>
<dbReference type="GO" id="GO:0005886">
    <property type="term" value="C:plasma membrane"/>
    <property type="evidence" value="ECO:0007669"/>
    <property type="project" value="UniProtKB-SubCell"/>
</dbReference>
<dbReference type="GO" id="GO:0015385">
    <property type="term" value="F:sodium:proton antiporter activity"/>
    <property type="evidence" value="ECO:0007669"/>
    <property type="project" value="InterPro"/>
</dbReference>
<dbReference type="HAMAP" id="MF_01599">
    <property type="entry name" value="NhaB"/>
    <property type="match status" value="1"/>
</dbReference>
<dbReference type="InterPro" id="IPR004671">
    <property type="entry name" value="Na+/H+_antiporter_NhaB"/>
</dbReference>
<dbReference type="NCBIfam" id="NF007093">
    <property type="entry name" value="PRK09547.1"/>
    <property type="match status" value="1"/>
</dbReference>
<dbReference type="PANTHER" id="PTHR43302:SF1">
    <property type="entry name" value="NA(+)_H(+) ANTIPORTER NHAB"/>
    <property type="match status" value="1"/>
</dbReference>
<dbReference type="PANTHER" id="PTHR43302">
    <property type="entry name" value="TRANSPORTER ARSB-RELATED"/>
    <property type="match status" value="1"/>
</dbReference>
<dbReference type="Pfam" id="PF06450">
    <property type="entry name" value="NhaB"/>
    <property type="match status" value="1"/>
</dbReference>
<keyword id="KW-0050">Antiport</keyword>
<keyword id="KW-0997">Cell inner membrane</keyword>
<keyword id="KW-1003">Cell membrane</keyword>
<keyword id="KW-0406">Ion transport</keyword>
<keyword id="KW-0472">Membrane</keyword>
<keyword id="KW-1185">Reference proteome</keyword>
<keyword id="KW-0915">Sodium</keyword>
<keyword id="KW-0739">Sodium transport</keyword>
<keyword id="KW-0812">Transmembrane</keyword>
<keyword id="KW-1133">Transmembrane helix</keyword>
<keyword id="KW-0813">Transport</keyword>
<protein>
    <recommendedName>
        <fullName evidence="1">Na(+)/H(+) antiporter NhaB</fullName>
    </recommendedName>
    <alternativeName>
        <fullName evidence="1">Sodium/proton antiporter NhaB</fullName>
    </alternativeName>
</protein>
<evidence type="ECO:0000255" key="1">
    <source>
        <dbReference type="HAMAP-Rule" id="MF_01599"/>
    </source>
</evidence>
<organism>
    <name type="scientific">Hahella chejuensis (strain KCTC 2396)</name>
    <dbReference type="NCBI Taxonomy" id="349521"/>
    <lineage>
        <taxon>Bacteria</taxon>
        <taxon>Pseudomonadati</taxon>
        <taxon>Pseudomonadota</taxon>
        <taxon>Gammaproteobacteria</taxon>
        <taxon>Oceanospirillales</taxon>
        <taxon>Hahellaceae</taxon>
        <taxon>Hahella</taxon>
    </lineage>
</organism>
<sequence length="499" mass="54732">MVTTLPQAFYSNFLGNAPSWYKKAICLFLLINPVIFLISPYIAGWVLILEFIFTLAMALKCYPLQPGGLLAIEAVLIGMVSPHTVYEEVSGNLEVILLLVFMVAGIYFMKELLLHLFTKILLSIRSKAILSLLFSLVAAVLSAFLDALTVTAVIISVAVGFYSVYHKVASGKHFHHDHDHGDDESVHHDHRADLEQFRSFLRSLLMHAAVGTALGGVCTQVGEPQNLLIAQRLGWDFIEFFVRMAPISIPVLIAGLITCVILEKTRWFGYGDDIPASVRKILEDFNEAEKKKMTLQHESKLITQAIVALILVVALALHLAEVGLIGLTVIILATAFCGVIEEHQIGKAFEEALPFTSLLVVFFAVVGVIHEQHLFTGIINYVLGLEKSVQPGMFFIANGVLSMISDNVFVATVYIDEVRTAFNDGLIDRAHYEALAVAINTGTNLPSVATPNGQAAFLFLLTSAIAPLIRLSYGKMVWMALPYTLVMGGLGYVMIVITI</sequence>
<comment type="function">
    <text evidence="1">Na(+)/H(+) antiporter that extrudes sodium in exchange for external protons.</text>
</comment>
<comment type="catalytic activity">
    <reaction evidence="1">
        <text>2 Na(+)(in) + 3 H(+)(out) = 2 Na(+)(out) + 3 H(+)(in)</text>
        <dbReference type="Rhea" id="RHEA:29247"/>
        <dbReference type="ChEBI" id="CHEBI:15378"/>
        <dbReference type="ChEBI" id="CHEBI:29101"/>
    </reaction>
    <physiologicalReaction direction="left-to-right" evidence="1">
        <dbReference type="Rhea" id="RHEA:29248"/>
    </physiologicalReaction>
</comment>
<comment type="subcellular location">
    <subcellularLocation>
        <location evidence="1">Cell inner membrane</location>
        <topology evidence="1">Multi-pass membrane protein</topology>
    </subcellularLocation>
</comment>
<comment type="similarity">
    <text evidence="1">Belongs to the NhaB Na(+)/H(+) (TC 2.A.34) antiporter family.</text>
</comment>
<name>NHAB_HAHCH</name>
<accession>Q2SJ43</accession>
<feature type="chain" id="PRO_0000333097" description="Na(+)/H(+) antiporter NhaB">
    <location>
        <begin position="1"/>
        <end position="499"/>
    </location>
</feature>
<feature type="transmembrane region" description="Helical" evidence="1">
    <location>
        <begin position="33"/>
        <end position="53"/>
    </location>
</feature>
<feature type="transmembrane region" description="Helical" evidence="1">
    <location>
        <begin position="66"/>
        <end position="86"/>
    </location>
</feature>
<feature type="transmembrane region" description="Helical" evidence="1">
    <location>
        <begin position="89"/>
        <end position="109"/>
    </location>
</feature>
<feature type="transmembrane region" description="Helical" evidence="1">
    <location>
        <begin position="128"/>
        <end position="148"/>
    </location>
</feature>
<feature type="transmembrane region" description="Helical" evidence="1">
    <location>
        <begin position="237"/>
        <end position="257"/>
    </location>
</feature>
<feature type="transmembrane region" description="Helical" evidence="1">
    <location>
        <begin position="305"/>
        <end position="325"/>
    </location>
</feature>
<feature type="transmembrane region" description="Helical" evidence="1">
    <location>
        <begin position="326"/>
        <end position="346"/>
    </location>
</feature>
<feature type="transmembrane region" description="Helical" evidence="1">
    <location>
        <begin position="349"/>
        <end position="369"/>
    </location>
</feature>
<feature type="transmembrane region" description="Helical" evidence="1">
    <location>
        <begin position="393"/>
        <end position="413"/>
    </location>
</feature>
<feature type="transmembrane region" description="Helical" evidence="1">
    <location>
        <begin position="449"/>
        <end position="469"/>
    </location>
</feature>
<feature type="transmembrane region" description="Helical" evidence="1">
    <location>
        <begin position="477"/>
        <end position="497"/>
    </location>
</feature>
<gene>
    <name evidence="1" type="primary">nhaB</name>
    <name type="ordered locus">HCH_02529</name>
</gene>
<proteinExistence type="inferred from homology"/>
<reference key="1">
    <citation type="journal article" date="2005" name="Nucleic Acids Res.">
        <title>Genomic blueprint of Hahella chejuensis, a marine microbe producing an algicidal agent.</title>
        <authorList>
            <person name="Jeong H."/>
            <person name="Yim J.H."/>
            <person name="Lee C."/>
            <person name="Choi S.-H."/>
            <person name="Park Y.K."/>
            <person name="Yoon S.H."/>
            <person name="Hur C.-G."/>
            <person name="Kang H.-Y."/>
            <person name="Kim D."/>
            <person name="Lee H.H."/>
            <person name="Park K.H."/>
            <person name="Park S.-H."/>
            <person name="Park H.-S."/>
            <person name="Lee H.K."/>
            <person name="Oh T.K."/>
            <person name="Kim J.F."/>
        </authorList>
    </citation>
    <scope>NUCLEOTIDE SEQUENCE [LARGE SCALE GENOMIC DNA]</scope>
    <source>
        <strain>KCTC 2396</strain>
    </source>
</reference>